<reference key="1">
    <citation type="journal article" date="2003" name="Nat. Genet.">
        <title>Comparative analysis of the genome sequences of Bordetella pertussis, Bordetella parapertussis and Bordetella bronchiseptica.</title>
        <authorList>
            <person name="Parkhill J."/>
            <person name="Sebaihia M."/>
            <person name="Preston A."/>
            <person name="Murphy L.D."/>
            <person name="Thomson N.R."/>
            <person name="Harris D.E."/>
            <person name="Holden M.T.G."/>
            <person name="Churcher C.M."/>
            <person name="Bentley S.D."/>
            <person name="Mungall K.L."/>
            <person name="Cerdeno-Tarraga A.-M."/>
            <person name="Temple L."/>
            <person name="James K.D."/>
            <person name="Harris B."/>
            <person name="Quail M.A."/>
            <person name="Achtman M."/>
            <person name="Atkin R."/>
            <person name="Baker S."/>
            <person name="Basham D."/>
            <person name="Bason N."/>
            <person name="Cherevach I."/>
            <person name="Chillingworth T."/>
            <person name="Collins M."/>
            <person name="Cronin A."/>
            <person name="Davis P."/>
            <person name="Doggett J."/>
            <person name="Feltwell T."/>
            <person name="Goble A."/>
            <person name="Hamlin N."/>
            <person name="Hauser H."/>
            <person name="Holroyd S."/>
            <person name="Jagels K."/>
            <person name="Leather S."/>
            <person name="Moule S."/>
            <person name="Norberczak H."/>
            <person name="O'Neil S."/>
            <person name="Ormond D."/>
            <person name="Price C."/>
            <person name="Rabbinowitsch E."/>
            <person name="Rutter S."/>
            <person name="Sanders M."/>
            <person name="Saunders D."/>
            <person name="Seeger K."/>
            <person name="Sharp S."/>
            <person name="Simmonds M."/>
            <person name="Skelton J."/>
            <person name="Squares R."/>
            <person name="Squares S."/>
            <person name="Stevens K."/>
            <person name="Unwin L."/>
            <person name="Whitehead S."/>
            <person name="Barrell B.G."/>
            <person name="Maskell D.J."/>
        </authorList>
    </citation>
    <scope>NUCLEOTIDE SEQUENCE [LARGE SCALE GENOMIC DNA]</scope>
    <source>
        <strain>12822 / ATCC BAA-587 / NCTC 13253</strain>
    </source>
</reference>
<organism>
    <name type="scientific">Bordetella parapertussis (strain 12822 / ATCC BAA-587 / NCTC 13253)</name>
    <dbReference type="NCBI Taxonomy" id="257311"/>
    <lineage>
        <taxon>Bacteria</taxon>
        <taxon>Pseudomonadati</taxon>
        <taxon>Pseudomonadota</taxon>
        <taxon>Betaproteobacteria</taxon>
        <taxon>Burkholderiales</taxon>
        <taxon>Alcaligenaceae</taxon>
        <taxon>Bordetella</taxon>
    </lineage>
</organism>
<protein>
    <recommendedName>
        <fullName evidence="1">Phosphonates import ATP-binding protein PhnC</fullName>
        <ecNumber evidence="1">7.3.2.2</ecNumber>
    </recommendedName>
</protein>
<keyword id="KW-0067">ATP-binding</keyword>
<keyword id="KW-0997">Cell inner membrane</keyword>
<keyword id="KW-1003">Cell membrane</keyword>
<keyword id="KW-0472">Membrane</keyword>
<keyword id="KW-0547">Nucleotide-binding</keyword>
<keyword id="KW-0918">Phosphonate transport</keyword>
<keyword id="KW-1278">Translocase</keyword>
<keyword id="KW-0813">Transport</keyword>
<evidence type="ECO:0000255" key="1">
    <source>
        <dbReference type="HAMAP-Rule" id="MF_01713"/>
    </source>
</evidence>
<feature type="chain" id="PRO_0000092699" description="Phosphonates import ATP-binding protein PhnC">
    <location>
        <begin position="1"/>
        <end position="256"/>
    </location>
</feature>
<feature type="domain" description="ABC transporter" evidence="1">
    <location>
        <begin position="5"/>
        <end position="253"/>
    </location>
</feature>
<feature type="binding site" evidence="1">
    <location>
        <begin position="38"/>
        <end position="45"/>
    </location>
    <ligand>
        <name>ATP</name>
        <dbReference type="ChEBI" id="CHEBI:30616"/>
    </ligand>
</feature>
<accession>Q7W148</accession>
<proteinExistence type="inferred from homology"/>
<dbReference type="EC" id="7.3.2.2" evidence="1"/>
<dbReference type="EMBL" id="BX640425">
    <property type="protein sequence ID" value="CAE40262.1"/>
    <property type="molecule type" value="Genomic_DNA"/>
</dbReference>
<dbReference type="RefSeq" id="WP_010927715.1">
    <property type="nucleotide sequence ID" value="NC_002928.3"/>
</dbReference>
<dbReference type="SMR" id="Q7W148"/>
<dbReference type="GeneID" id="93202603"/>
<dbReference type="KEGG" id="bpa:BPP0853"/>
<dbReference type="HOGENOM" id="CLU_000604_1_22_4"/>
<dbReference type="Proteomes" id="UP000001421">
    <property type="component" value="Chromosome"/>
</dbReference>
<dbReference type="GO" id="GO:0005886">
    <property type="term" value="C:plasma membrane"/>
    <property type="evidence" value="ECO:0007669"/>
    <property type="project" value="UniProtKB-SubCell"/>
</dbReference>
<dbReference type="GO" id="GO:0015416">
    <property type="term" value="F:ABC-type phosphonate transporter activity"/>
    <property type="evidence" value="ECO:0007669"/>
    <property type="project" value="UniProtKB-EC"/>
</dbReference>
<dbReference type="GO" id="GO:0005524">
    <property type="term" value="F:ATP binding"/>
    <property type="evidence" value="ECO:0007669"/>
    <property type="project" value="UniProtKB-KW"/>
</dbReference>
<dbReference type="GO" id="GO:0016887">
    <property type="term" value="F:ATP hydrolysis activity"/>
    <property type="evidence" value="ECO:0007669"/>
    <property type="project" value="InterPro"/>
</dbReference>
<dbReference type="CDD" id="cd03256">
    <property type="entry name" value="ABC_PhnC_transporter"/>
    <property type="match status" value="1"/>
</dbReference>
<dbReference type="Gene3D" id="3.40.50.300">
    <property type="entry name" value="P-loop containing nucleotide triphosphate hydrolases"/>
    <property type="match status" value="1"/>
</dbReference>
<dbReference type="InterPro" id="IPR003593">
    <property type="entry name" value="AAA+_ATPase"/>
</dbReference>
<dbReference type="InterPro" id="IPR003439">
    <property type="entry name" value="ABC_transporter-like_ATP-bd"/>
</dbReference>
<dbReference type="InterPro" id="IPR017871">
    <property type="entry name" value="ABC_transporter-like_CS"/>
</dbReference>
<dbReference type="InterPro" id="IPR012693">
    <property type="entry name" value="ABC_transpr_PhnC"/>
</dbReference>
<dbReference type="InterPro" id="IPR050086">
    <property type="entry name" value="MetN_ABC_transporter-like"/>
</dbReference>
<dbReference type="InterPro" id="IPR027417">
    <property type="entry name" value="P-loop_NTPase"/>
</dbReference>
<dbReference type="NCBIfam" id="TIGR02315">
    <property type="entry name" value="ABC_phnC"/>
    <property type="match status" value="1"/>
</dbReference>
<dbReference type="PANTHER" id="PTHR43166">
    <property type="entry name" value="AMINO ACID IMPORT ATP-BINDING PROTEIN"/>
    <property type="match status" value="1"/>
</dbReference>
<dbReference type="PANTHER" id="PTHR43166:SF6">
    <property type="entry name" value="PHOSPHONATES IMPORT ATP-BINDING PROTEIN PHNC"/>
    <property type="match status" value="1"/>
</dbReference>
<dbReference type="Pfam" id="PF00005">
    <property type="entry name" value="ABC_tran"/>
    <property type="match status" value="1"/>
</dbReference>
<dbReference type="SMART" id="SM00382">
    <property type="entry name" value="AAA"/>
    <property type="match status" value="1"/>
</dbReference>
<dbReference type="SUPFAM" id="SSF52540">
    <property type="entry name" value="P-loop containing nucleoside triphosphate hydrolases"/>
    <property type="match status" value="1"/>
</dbReference>
<dbReference type="PROSITE" id="PS00211">
    <property type="entry name" value="ABC_TRANSPORTER_1"/>
    <property type="match status" value="1"/>
</dbReference>
<dbReference type="PROSITE" id="PS50893">
    <property type="entry name" value="ABC_TRANSPORTER_2"/>
    <property type="match status" value="1"/>
</dbReference>
<dbReference type="PROSITE" id="PS51249">
    <property type="entry name" value="PHNC"/>
    <property type="match status" value="1"/>
</dbReference>
<name>PHNC_BORPA</name>
<comment type="function">
    <text evidence="1">Part of the ABC transporter complex PhnCDE involved in phosphonates import. Responsible for energy coupling to the transport system.</text>
</comment>
<comment type="catalytic activity">
    <reaction evidence="1">
        <text>phosphonate(out) + ATP + H2O = phosphonate(in) + ADP + phosphate + H(+)</text>
        <dbReference type="Rhea" id="RHEA:18065"/>
        <dbReference type="ChEBI" id="CHEBI:15377"/>
        <dbReference type="ChEBI" id="CHEBI:15378"/>
        <dbReference type="ChEBI" id="CHEBI:16215"/>
        <dbReference type="ChEBI" id="CHEBI:30616"/>
        <dbReference type="ChEBI" id="CHEBI:43474"/>
        <dbReference type="ChEBI" id="CHEBI:456216"/>
        <dbReference type="EC" id="7.3.2.2"/>
    </reaction>
</comment>
<comment type="subunit">
    <text evidence="1">The complex is composed of two ATP-binding proteins (PhnC), two transmembrane proteins (PhnE) and a solute-binding protein (PhnD).</text>
</comment>
<comment type="subcellular location">
    <subcellularLocation>
        <location evidence="1">Cell inner membrane</location>
        <topology evidence="1">Peripheral membrane protein</topology>
    </subcellularLocation>
</comment>
<comment type="similarity">
    <text evidence="1">Belongs to the ABC transporter superfamily. Phosphonates importer (TC 3.A.1.9.1) family.</text>
</comment>
<sequence>MATSLRITGLVKEYRAGKPVLNGIDLDIAGQGLTAIIGPSGTGKSTLLRCINRLIEPTSGEIVLKDAEGTVDLARVRGQSLRRARRRIGMVFQEYNLVERLTVMENLLTGRLGYTSALNAWMRRFDPADIERAFQLLDTVGLAGFADQRADALSGGQRQRVGIARALMQRPQLLLADEPTSSLDPKTSVEIMKLLTEQGSVNGIPVLVNIHDVELARRYANRIVGMSGGHVVYDGDGKGLDATMLKTIYGGESWLE</sequence>
<gene>
    <name evidence="1" type="primary">phnC</name>
    <name type="ordered locus">BPP0853</name>
</gene>